<comment type="function">
    <text evidence="1">Required for respiratory activity and maintenance and expression of the mitochondrial genome.</text>
</comment>
<comment type="subcellular location">
    <subcellularLocation>
        <location evidence="1">Mitochondrion</location>
    </subcellularLocation>
</comment>
<comment type="similarity">
    <text evidence="4">Belongs to the RRG9 family.</text>
</comment>
<accession>C5GEF3</accession>
<name>RRG9_AJEDR</name>
<feature type="transit peptide" description="Mitochondrion" evidence="2">
    <location>
        <begin position="1"/>
        <end position="72"/>
    </location>
</feature>
<feature type="chain" id="PRO_0000407931" description="Required for respiratory growth protein 9, mitochondrial">
    <location>
        <begin position="73"/>
        <end position="269"/>
    </location>
</feature>
<feature type="region of interest" description="Disordered" evidence="3">
    <location>
        <begin position="73"/>
        <end position="171"/>
    </location>
</feature>
<feature type="compositionally biased region" description="Polar residues" evidence="3">
    <location>
        <begin position="76"/>
        <end position="91"/>
    </location>
</feature>
<feature type="compositionally biased region" description="Basic and acidic residues" evidence="3">
    <location>
        <begin position="99"/>
        <end position="110"/>
    </location>
</feature>
<feature type="compositionally biased region" description="Basic and acidic residues" evidence="3">
    <location>
        <begin position="135"/>
        <end position="147"/>
    </location>
</feature>
<dbReference type="EMBL" id="EQ999975">
    <property type="protein sequence ID" value="EEQ87552.1"/>
    <property type="molecule type" value="Genomic_DNA"/>
</dbReference>
<dbReference type="SMR" id="C5GEF3"/>
<dbReference type="STRING" id="559297.C5GEF3"/>
<dbReference type="VEuPathDB" id="FungiDB:BDCG_02672"/>
<dbReference type="eggNOG" id="ENOG502S7IA">
    <property type="taxonomic scope" value="Eukaryota"/>
</dbReference>
<dbReference type="HOGENOM" id="CLU_081333_0_0_1"/>
<dbReference type="OMA" id="RWERRHK"/>
<dbReference type="GO" id="GO:0005739">
    <property type="term" value="C:mitochondrion"/>
    <property type="evidence" value="ECO:0007669"/>
    <property type="project" value="UniProtKB-SubCell"/>
</dbReference>
<dbReference type="GO" id="GO:0005634">
    <property type="term" value="C:nucleus"/>
    <property type="evidence" value="ECO:0007669"/>
    <property type="project" value="TreeGrafter"/>
</dbReference>
<dbReference type="InterPro" id="IPR010487">
    <property type="entry name" value="NGRN/Rrg9"/>
</dbReference>
<dbReference type="PANTHER" id="PTHR13475">
    <property type="entry name" value="NEUGRIN"/>
    <property type="match status" value="1"/>
</dbReference>
<dbReference type="PANTHER" id="PTHR13475:SF3">
    <property type="entry name" value="NEUGRIN"/>
    <property type="match status" value="1"/>
</dbReference>
<dbReference type="Pfam" id="PF06413">
    <property type="entry name" value="Neugrin"/>
    <property type="match status" value="1"/>
</dbReference>
<organism>
    <name type="scientific">Ajellomyces dermatitidis (strain ER-3 / ATCC MYA-2586)</name>
    <name type="common">Blastomyces dermatitidis</name>
    <dbReference type="NCBI Taxonomy" id="559297"/>
    <lineage>
        <taxon>Eukaryota</taxon>
        <taxon>Fungi</taxon>
        <taxon>Dikarya</taxon>
        <taxon>Ascomycota</taxon>
        <taxon>Pezizomycotina</taxon>
        <taxon>Eurotiomycetes</taxon>
        <taxon>Eurotiomycetidae</taxon>
        <taxon>Onygenales</taxon>
        <taxon>Ajellomycetaceae</taxon>
        <taxon>Blastomyces</taxon>
    </lineage>
</organism>
<evidence type="ECO:0000250" key="1"/>
<evidence type="ECO:0000255" key="2"/>
<evidence type="ECO:0000256" key="3">
    <source>
        <dbReference type="SAM" id="MobiDB-lite"/>
    </source>
</evidence>
<evidence type="ECO:0000305" key="4"/>
<reference key="1">
    <citation type="journal article" date="2015" name="PLoS Genet.">
        <title>The dynamic genome and transcriptome of the human fungal pathogen Blastomyces and close relative Emmonsia.</title>
        <authorList>
            <person name="Munoz J.F."/>
            <person name="Gauthier G.M."/>
            <person name="Desjardins C.A."/>
            <person name="Gallo J.E."/>
            <person name="Holder J."/>
            <person name="Sullivan T.D."/>
            <person name="Marty A.J."/>
            <person name="Carmen J.C."/>
            <person name="Chen Z."/>
            <person name="Ding L."/>
            <person name="Gujja S."/>
            <person name="Magrini V."/>
            <person name="Misas E."/>
            <person name="Mitreva M."/>
            <person name="Priest M."/>
            <person name="Saif S."/>
            <person name="Whiston E.A."/>
            <person name="Young S."/>
            <person name="Zeng Q."/>
            <person name="Goldman W.E."/>
            <person name="Mardis E.R."/>
            <person name="Taylor J.W."/>
            <person name="McEwen J.G."/>
            <person name="Clay O.K."/>
            <person name="Klein B.S."/>
            <person name="Cuomo C.A."/>
        </authorList>
    </citation>
    <scope>NUCLEOTIDE SEQUENCE [LARGE SCALE GENOMIC DNA]</scope>
    <source>
        <strain>ER-3 / ATCC MYA-2586</strain>
    </source>
</reference>
<gene>
    <name type="primary">RRG9</name>
    <name type="ORF">BDCG_02672</name>
</gene>
<keyword id="KW-0496">Mitochondrion</keyword>
<keyword id="KW-0809">Transit peptide</keyword>
<protein>
    <recommendedName>
        <fullName>Required for respiratory growth protein 9, mitochondrial</fullName>
    </recommendedName>
</protein>
<sequence>MSVSMLKSSPLHSASVASGLLKCFLGAHPLLPATYEKCGLTTSCRRSTTIHSPAKIWQPPSCRYFSKSRPILSPLPETSEQSSPSYLSTANKPPGTDEQGLKSDRGDINSDSKSTSKTSRSKKSNVPRSSKSTTQKREKPEKPRELEPWQIQKQALKKKFPEGWNPRKRLHPDTLDTIRHLHQQDPNIYSTPALAQEFKVSPEAIRRILKSKWQPTPEVAAERRERWEKRRKRIWNQLSEIGVRPHRPSFADVSDTKVLEKKRRTVGSK</sequence>
<proteinExistence type="inferred from homology"/>